<organism>
    <name type="scientific">Schizosaccharomyces pombe (strain 972 / ATCC 24843)</name>
    <name type="common">Fission yeast</name>
    <dbReference type="NCBI Taxonomy" id="284812"/>
    <lineage>
        <taxon>Eukaryota</taxon>
        <taxon>Fungi</taxon>
        <taxon>Dikarya</taxon>
        <taxon>Ascomycota</taxon>
        <taxon>Taphrinomycotina</taxon>
        <taxon>Schizosaccharomycetes</taxon>
        <taxon>Schizosaccharomycetales</taxon>
        <taxon>Schizosaccharomycetaceae</taxon>
        <taxon>Schizosaccharomyces</taxon>
    </lineage>
</organism>
<reference key="1">
    <citation type="journal article" date="2002" name="Nature">
        <title>The genome sequence of Schizosaccharomyces pombe.</title>
        <authorList>
            <person name="Wood V."/>
            <person name="Gwilliam R."/>
            <person name="Rajandream M.A."/>
            <person name="Lyne M.H."/>
            <person name="Lyne R."/>
            <person name="Stewart A."/>
            <person name="Sgouros J.G."/>
            <person name="Peat N."/>
            <person name="Hayles J."/>
            <person name="Baker S.G."/>
            <person name="Basham D."/>
            <person name="Bowman S."/>
            <person name="Brooks K."/>
            <person name="Brown D."/>
            <person name="Brown S."/>
            <person name="Chillingworth T."/>
            <person name="Churcher C.M."/>
            <person name="Collins M."/>
            <person name="Connor R."/>
            <person name="Cronin A."/>
            <person name="Davis P."/>
            <person name="Feltwell T."/>
            <person name="Fraser A."/>
            <person name="Gentles S."/>
            <person name="Goble A."/>
            <person name="Hamlin N."/>
            <person name="Harris D.E."/>
            <person name="Hidalgo J."/>
            <person name="Hodgson G."/>
            <person name="Holroyd S."/>
            <person name="Hornsby T."/>
            <person name="Howarth S."/>
            <person name="Huckle E.J."/>
            <person name="Hunt S."/>
            <person name="Jagels K."/>
            <person name="James K.D."/>
            <person name="Jones L."/>
            <person name="Jones M."/>
            <person name="Leather S."/>
            <person name="McDonald S."/>
            <person name="McLean J."/>
            <person name="Mooney P."/>
            <person name="Moule S."/>
            <person name="Mungall K.L."/>
            <person name="Murphy L.D."/>
            <person name="Niblett D."/>
            <person name="Odell C."/>
            <person name="Oliver K."/>
            <person name="O'Neil S."/>
            <person name="Pearson D."/>
            <person name="Quail M.A."/>
            <person name="Rabbinowitsch E."/>
            <person name="Rutherford K.M."/>
            <person name="Rutter S."/>
            <person name="Saunders D."/>
            <person name="Seeger K."/>
            <person name="Sharp S."/>
            <person name="Skelton J."/>
            <person name="Simmonds M.N."/>
            <person name="Squares R."/>
            <person name="Squares S."/>
            <person name="Stevens K."/>
            <person name="Taylor K."/>
            <person name="Taylor R.G."/>
            <person name="Tivey A."/>
            <person name="Walsh S.V."/>
            <person name="Warren T."/>
            <person name="Whitehead S."/>
            <person name="Woodward J.R."/>
            <person name="Volckaert G."/>
            <person name="Aert R."/>
            <person name="Robben J."/>
            <person name="Grymonprez B."/>
            <person name="Weltjens I."/>
            <person name="Vanstreels E."/>
            <person name="Rieger M."/>
            <person name="Schaefer M."/>
            <person name="Mueller-Auer S."/>
            <person name="Gabel C."/>
            <person name="Fuchs M."/>
            <person name="Duesterhoeft A."/>
            <person name="Fritzc C."/>
            <person name="Holzer E."/>
            <person name="Moestl D."/>
            <person name="Hilbert H."/>
            <person name="Borzym K."/>
            <person name="Langer I."/>
            <person name="Beck A."/>
            <person name="Lehrach H."/>
            <person name="Reinhardt R."/>
            <person name="Pohl T.M."/>
            <person name="Eger P."/>
            <person name="Zimmermann W."/>
            <person name="Wedler H."/>
            <person name="Wambutt R."/>
            <person name="Purnelle B."/>
            <person name="Goffeau A."/>
            <person name="Cadieu E."/>
            <person name="Dreano S."/>
            <person name="Gloux S."/>
            <person name="Lelaure V."/>
            <person name="Mottier S."/>
            <person name="Galibert F."/>
            <person name="Aves S.J."/>
            <person name="Xiang Z."/>
            <person name="Hunt C."/>
            <person name="Moore K."/>
            <person name="Hurst S.M."/>
            <person name="Lucas M."/>
            <person name="Rochet M."/>
            <person name="Gaillardin C."/>
            <person name="Tallada V.A."/>
            <person name="Garzon A."/>
            <person name="Thode G."/>
            <person name="Daga R.R."/>
            <person name="Cruzado L."/>
            <person name="Jimenez J."/>
            <person name="Sanchez M."/>
            <person name="del Rey F."/>
            <person name="Benito J."/>
            <person name="Dominguez A."/>
            <person name="Revuelta J.L."/>
            <person name="Moreno S."/>
            <person name="Armstrong J."/>
            <person name="Forsburg S.L."/>
            <person name="Cerutti L."/>
            <person name="Lowe T."/>
            <person name="McCombie W.R."/>
            <person name="Paulsen I."/>
            <person name="Potashkin J."/>
            <person name="Shpakovski G.V."/>
            <person name="Ussery D."/>
            <person name="Barrell B.G."/>
            <person name="Nurse P."/>
        </authorList>
    </citation>
    <scope>NUCLEOTIDE SEQUENCE [LARGE SCALE GENOMIC DNA]</scope>
    <source>
        <strain>972 / ATCC 24843</strain>
    </source>
</reference>
<reference key="2">
    <citation type="journal article" date="2006" name="Nat. Biotechnol.">
        <title>ORFeome cloning and global analysis of protein localization in the fission yeast Schizosaccharomyces pombe.</title>
        <authorList>
            <person name="Matsuyama A."/>
            <person name="Arai R."/>
            <person name="Yashiroda Y."/>
            <person name="Shirai A."/>
            <person name="Kamata A."/>
            <person name="Sekido S."/>
            <person name="Kobayashi Y."/>
            <person name="Hashimoto A."/>
            <person name="Hamamoto M."/>
            <person name="Hiraoka Y."/>
            <person name="Horinouchi S."/>
            <person name="Yoshida M."/>
        </authorList>
    </citation>
    <scope>SUBCELLULAR LOCATION [LARGE SCALE ANALYSIS]</scope>
</reference>
<feature type="chain" id="PRO_0000310363" description="Putative aminodeoxychorismate synthase">
    <location>
        <begin position="1"/>
        <end position="718"/>
    </location>
</feature>
<feature type="domain" description="Glutamine amidotransferase type-1" evidence="2">
    <location>
        <begin position="9"/>
        <end position="203"/>
    </location>
</feature>
<feature type="region of interest" description="PABB component" evidence="1">
    <location>
        <begin position="266"/>
        <end position="718"/>
    </location>
</feature>
<feature type="active site" description="Nucleophile" evidence="2">
    <location>
        <position position="88"/>
    </location>
</feature>
<feature type="active site" evidence="2">
    <location>
        <position position="177"/>
    </location>
</feature>
<feature type="active site" evidence="2">
    <location>
        <position position="179"/>
    </location>
</feature>
<proteinExistence type="inferred from homology"/>
<name>ADCS_SCHPO</name>
<gene>
    <name type="ORF">SPBP8B7.29</name>
</gene>
<accession>O94277</accession>
<protein>
    <recommendedName>
        <fullName>Putative aminodeoxychorismate synthase</fullName>
        <shortName>ADC synthase</shortName>
        <ecNumber>2.6.1.85</ecNumber>
    </recommendedName>
    <alternativeName>
        <fullName>P-aminobenzoic acid synthase</fullName>
        <shortName>PABA synthase</shortName>
    </alternativeName>
    <alternativeName>
        <fullName>Para-aminobenzoate synthase</fullName>
    </alternativeName>
</protein>
<comment type="function">
    <text evidence="1">Catalyzes the biosynthesis of 4-amino-4-deoxychorismate (ADC) from chorismate and glutamine. Required for the synthesis of 4-aminobenzoate (PABA), an important component in tetrahydrofolate biosynthesis (By similarity).</text>
</comment>
<comment type="catalytic activity">
    <reaction>
        <text>chorismate + L-glutamine = 4-amino-4-deoxychorismate + L-glutamate</text>
        <dbReference type="Rhea" id="RHEA:11672"/>
        <dbReference type="ChEBI" id="CHEBI:29748"/>
        <dbReference type="ChEBI" id="CHEBI:29985"/>
        <dbReference type="ChEBI" id="CHEBI:58359"/>
        <dbReference type="ChEBI" id="CHEBI:58406"/>
        <dbReference type="EC" id="2.6.1.85"/>
    </reaction>
</comment>
<comment type="pathway">
    <text>Cofactor biosynthesis; tetrahydrofolate biosynthesis; 4-aminobenzoate from chorismate: step 1/2.</text>
</comment>
<comment type="subcellular location">
    <subcellularLocation>
        <location evidence="3">Cytoplasm</location>
    </subcellularLocation>
    <subcellularLocation>
        <location evidence="3">Nucleus</location>
    </subcellularLocation>
</comment>
<comment type="similarity">
    <text evidence="4">In the C-terminal section; belongs to the anthranilate synthase component I family.</text>
</comment>
<dbReference type="EC" id="2.6.1.85"/>
<dbReference type="EMBL" id="CU329671">
    <property type="protein sequence ID" value="CAA21814.1"/>
    <property type="molecule type" value="Genomic_DNA"/>
</dbReference>
<dbReference type="PIR" id="T40823">
    <property type="entry name" value="T40823"/>
</dbReference>
<dbReference type="SMR" id="O94277"/>
<dbReference type="BioGRID" id="277893">
    <property type="interactions" value="1"/>
</dbReference>
<dbReference type="FunCoup" id="O94277">
    <property type="interactions" value="136"/>
</dbReference>
<dbReference type="STRING" id="284812.O94277"/>
<dbReference type="MEROPS" id="C26.A26"/>
<dbReference type="iPTMnet" id="O94277"/>
<dbReference type="PaxDb" id="4896-SPBP8B7.29.1"/>
<dbReference type="EnsemblFungi" id="SPBP8B7.29.1">
    <property type="protein sequence ID" value="SPBP8B7.29.1:pep"/>
    <property type="gene ID" value="SPBP8B7.29"/>
</dbReference>
<dbReference type="KEGG" id="spo:2541382"/>
<dbReference type="PomBase" id="SPBP8B7.29"/>
<dbReference type="VEuPathDB" id="FungiDB:SPBP8B7.29"/>
<dbReference type="eggNOG" id="KOG1224">
    <property type="taxonomic scope" value="Eukaryota"/>
</dbReference>
<dbReference type="HOGENOM" id="CLU_006493_0_0_1"/>
<dbReference type="InParanoid" id="O94277"/>
<dbReference type="OMA" id="DWSVNIR"/>
<dbReference type="PhylomeDB" id="O94277"/>
<dbReference type="UniPathway" id="UPA00077">
    <property type="reaction ID" value="UER00149"/>
</dbReference>
<dbReference type="PRO" id="PR:O94277"/>
<dbReference type="Proteomes" id="UP000002485">
    <property type="component" value="Chromosome II"/>
</dbReference>
<dbReference type="GO" id="GO:0005737">
    <property type="term" value="C:cytoplasm"/>
    <property type="evidence" value="ECO:0000318"/>
    <property type="project" value="GO_Central"/>
</dbReference>
<dbReference type="GO" id="GO:0005829">
    <property type="term" value="C:cytosol"/>
    <property type="evidence" value="ECO:0007005"/>
    <property type="project" value="PomBase"/>
</dbReference>
<dbReference type="GO" id="GO:0005634">
    <property type="term" value="C:nucleus"/>
    <property type="evidence" value="ECO:0007005"/>
    <property type="project" value="PomBase"/>
</dbReference>
<dbReference type="GO" id="GO:0046820">
    <property type="term" value="F:4-amino-4-deoxychorismate synthase activity"/>
    <property type="evidence" value="ECO:0000318"/>
    <property type="project" value="GO_Central"/>
</dbReference>
<dbReference type="GO" id="GO:0008153">
    <property type="term" value="P:4-aminobenzoate biosynthetic process"/>
    <property type="evidence" value="ECO:0000318"/>
    <property type="project" value="GO_Central"/>
</dbReference>
<dbReference type="GO" id="GO:0046656">
    <property type="term" value="P:folic acid biosynthetic process"/>
    <property type="evidence" value="ECO:0000266"/>
    <property type="project" value="PomBase"/>
</dbReference>
<dbReference type="GO" id="GO:0046654">
    <property type="term" value="P:tetrahydrofolate biosynthetic process"/>
    <property type="evidence" value="ECO:0007669"/>
    <property type="project" value="UniProtKB-UniPathway"/>
</dbReference>
<dbReference type="CDD" id="cd01743">
    <property type="entry name" value="GATase1_Anthranilate_Synthase"/>
    <property type="match status" value="1"/>
</dbReference>
<dbReference type="Gene3D" id="3.40.50.880">
    <property type="match status" value="1"/>
</dbReference>
<dbReference type="Gene3D" id="3.60.120.10">
    <property type="entry name" value="Anthranilate synthase"/>
    <property type="match status" value="1"/>
</dbReference>
<dbReference type="InterPro" id="IPR005801">
    <property type="entry name" value="ADC_synthase"/>
</dbReference>
<dbReference type="InterPro" id="IPR019999">
    <property type="entry name" value="Anth_synth_I-like"/>
</dbReference>
<dbReference type="InterPro" id="IPR006805">
    <property type="entry name" value="Anth_synth_I_N"/>
</dbReference>
<dbReference type="InterPro" id="IPR015890">
    <property type="entry name" value="Chorismate_C"/>
</dbReference>
<dbReference type="InterPro" id="IPR029062">
    <property type="entry name" value="Class_I_gatase-like"/>
</dbReference>
<dbReference type="InterPro" id="IPR017926">
    <property type="entry name" value="GATASE"/>
</dbReference>
<dbReference type="InterPro" id="IPR010117">
    <property type="entry name" value="PabB_fungal"/>
</dbReference>
<dbReference type="InterPro" id="IPR006221">
    <property type="entry name" value="TrpG/PapA_dom"/>
</dbReference>
<dbReference type="NCBIfam" id="TIGR01823">
    <property type="entry name" value="PabB-fungal"/>
    <property type="match status" value="1"/>
</dbReference>
<dbReference type="NCBIfam" id="TIGR00566">
    <property type="entry name" value="trpG_papA"/>
    <property type="match status" value="1"/>
</dbReference>
<dbReference type="PANTHER" id="PTHR11236">
    <property type="entry name" value="AMINOBENZOATE/ANTHRANILATE SYNTHASE"/>
    <property type="match status" value="1"/>
</dbReference>
<dbReference type="PANTHER" id="PTHR11236:SF18">
    <property type="entry name" value="AMINODEOXYCHORISMATE SYNTHASE"/>
    <property type="match status" value="1"/>
</dbReference>
<dbReference type="Pfam" id="PF04715">
    <property type="entry name" value="Anth_synt_I_N"/>
    <property type="match status" value="1"/>
</dbReference>
<dbReference type="Pfam" id="PF00425">
    <property type="entry name" value="Chorismate_bind"/>
    <property type="match status" value="1"/>
</dbReference>
<dbReference type="Pfam" id="PF00117">
    <property type="entry name" value="GATase"/>
    <property type="match status" value="1"/>
</dbReference>
<dbReference type="PRINTS" id="PR00097">
    <property type="entry name" value="ANTSNTHASEII"/>
</dbReference>
<dbReference type="PRINTS" id="PR00096">
    <property type="entry name" value="GATASE"/>
</dbReference>
<dbReference type="SUPFAM" id="SSF56322">
    <property type="entry name" value="ADC synthase"/>
    <property type="match status" value="1"/>
</dbReference>
<dbReference type="SUPFAM" id="SSF52317">
    <property type="entry name" value="Class I glutamine amidotransferase-like"/>
    <property type="match status" value="1"/>
</dbReference>
<dbReference type="PROSITE" id="PS51273">
    <property type="entry name" value="GATASE_TYPE_1"/>
    <property type="match status" value="1"/>
</dbReference>
<sequence>MSEISNRLQILLIDCYDSYTFNLYDLLYKASENACVIVVHWDKMSPDLWEDILQFDAIVVGPGPGHPAEYSSILNRIWQLNIPVMGICLGFQSLALYHGATIERMPNLPWHGRVSSVTTSKTFIFDGISAVKGMRYHSLYANKIPIDSLQILAQSDEDNIVMSIKATKFPHFGILYHPESVGSSKSLKIFKNFLSLADTPNIQCVNSFSKSANGFSHNLNRYDISPAAFILKSGSPSLQIHSVEIPWVEPLALADCIQKSGNPICFLDSAKKPGRYSILGILTGPLARIIHYEKATNTTEIRICKDNSFVRINNDLWSTVADFMNQHKAIKPDTNLPFYGGIMGIIGYECSDLSTKSVSNASFPLDFQQTTVDAELAFVDRSFVFDLEIKKLFVQTLTPLNETCSEWWGELLASTCNTKLDNLSCLHSFDGKQNFGLVQSFPKKEVYCESVKACQEHLLAGDSYEMCLTDTTFVSAPPELSDFEMYMRARSLNPATFAGFVRLNHFTLLCCSPERFLQFRDDRCLFSPIKGTLKREGHMSLEEARKKLLNEKDMGELNMIIDLIRNDLHQLAKKNSVHVPELYSVEEHSNVYSLLSNIYGRIESPITAWDVLSKSFPPGSMTGAPKLRSVRMLEPLEQHGRGIYSGTLGYWDVTGSAEFNVIIRSAFKYKADDYWRIGAGGAVTILSSPEGEYEEMVLKANSILPAFVNLKNKKRSCK</sequence>
<evidence type="ECO:0000250" key="1"/>
<evidence type="ECO:0000255" key="2">
    <source>
        <dbReference type="PROSITE-ProRule" id="PRU00605"/>
    </source>
</evidence>
<evidence type="ECO:0000269" key="3">
    <source>
    </source>
</evidence>
<evidence type="ECO:0000305" key="4"/>
<keyword id="KW-0963">Cytoplasm</keyword>
<keyword id="KW-0289">Folate biosynthesis</keyword>
<keyword id="KW-0315">Glutamine amidotransferase</keyword>
<keyword id="KW-0511">Multifunctional enzyme</keyword>
<keyword id="KW-0539">Nucleus</keyword>
<keyword id="KW-1185">Reference proteome</keyword>
<keyword id="KW-0808">Transferase</keyword>